<keyword id="KW-0002">3D-structure</keyword>
<keyword id="KW-0004">4Fe-4S</keyword>
<keyword id="KW-0963">Cytoplasm</keyword>
<keyword id="KW-0227">DNA damage</keyword>
<keyword id="KW-0234">DNA repair</keyword>
<keyword id="KW-0238">DNA-binding</keyword>
<keyword id="KW-0269">Exonuclease</keyword>
<keyword id="KW-0378">Hydrolase</keyword>
<keyword id="KW-0408">Iron</keyword>
<keyword id="KW-0411">Iron-sulfur</keyword>
<keyword id="KW-0460">Magnesium</keyword>
<keyword id="KW-0479">Metal-binding</keyword>
<keyword id="KW-0540">Nuclease</keyword>
<keyword id="KW-0539">Nucleus</keyword>
<keyword id="KW-1267">Proteomics identification</keyword>
<keyword id="KW-1185">Reference proteome</keyword>
<feature type="chain" id="PRO_0000307320" description="Exonuclease V">
    <location>
        <begin position="1"/>
        <end position="373"/>
    </location>
</feature>
<feature type="binding site" evidence="6 7 8 9">
    <location>
        <position position="92"/>
    </location>
    <ligand>
        <name>[4Fe-4S] cluster</name>
        <dbReference type="ChEBI" id="CHEBI:49883"/>
    </ligand>
</feature>
<feature type="binding site" evidence="9">
    <location>
        <position position="182"/>
    </location>
    <ligand>
        <name>Mg(2+)</name>
        <dbReference type="ChEBI" id="CHEBI:18420"/>
    </ligand>
</feature>
<feature type="binding site" evidence="9">
    <location>
        <position position="196"/>
    </location>
    <ligand>
        <name>Mg(2+)</name>
        <dbReference type="ChEBI" id="CHEBI:18420"/>
    </ligand>
</feature>
<feature type="binding site" evidence="6 7 9">
    <location>
        <position position="343"/>
    </location>
    <ligand>
        <name>[4Fe-4S] cluster</name>
        <dbReference type="ChEBI" id="CHEBI:49883"/>
    </ligand>
</feature>
<feature type="binding site" evidence="6 7 8 9">
    <location>
        <position position="346"/>
    </location>
    <ligand>
        <name>[4Fe-4S] cluster</name>
        <dbReference type="ChEBI" id="CHEBI:49883"/>
    </ligand>
</feature>
<feature type="binding site" evidence="6 7 9">
    <location>
        <position position="352"/>
    </location>
    <ligand>
        <name>[4Fe-4S] cluster</name>
        <dbReference type="ChEBI" id="CHEBI:49883"/>
    </ligand>
</feature>
<feature type="sequence variant" id="VAR_035407" description="Does not affect exonuclease activity; dbSNP:rs1134586." evidence="3">
    <original>D</original>
    <variation>N</variation>
    <location>
        <position position="115"/>
    </location>
</feature>
<feature type="sequence variant" id="VAR_035408" description="Does not affect exonuclease activity; dbSNP:rs11208299." evidence="2 3">
    <original>G</original>
    <variation>V</variation>
    <location>
        <position position="172"/>
    </location>
</feature>
<feature type="mutagenesis site" description="Nearly abolishes exonuclease activity." evidence="3">
    <original>E</original>
    <variation>A</variation>
    <location>
        <position position="196"/>
    </location>
</feature>
<feature type="mutagenesis site" description="Abolishes iron-sulfur-binding and affects exonuclease activity; when associated with A-346." evidence="3">
    <original>C</original>
    <variation>A</variation>
    <location>
        <position position="343"/>
    </location>
</feature>
<feature type="mutagenesis site" description="Abolishes iron-sulfur-binding and affects exonuclease activity; when associated with A-343." evidence="3">
    <original>C</original>
    <variation>A</variation>
    <location>
        <position position="346"/>
    </location>
</feature>
<feature type="helix" evidence="10">
    <location>
        <begin position="72"/>
        <end position="75"/>
    </location>
</feature>
<feature type="strand" evidence="10">
    <location>
        <begin position="79"/>
        <end position="82"/>
    </location>
</feature>
<feature type="helix" evidence="10">
    <location>
        <begin position="83"/>
        <end position="91"/>
    </location>
</feature>
<feature type="helix" evidence="10">
    <location>
        <begin position="93"/>
        <end position="101"/>
    </location>
</feature>
<feature type="helix" evidence="10">
    <location>
        <begin position="122"/>
        <end position="128"/>
    </location>
</feature>
<feature type="helix" evidence="10">
    <location>
        <begin position="139"/>
        <end position="160"/>
    </location>
</feature>
<feature type="strand" evidence="10">
    <location>
        <begin position="161"/>
        <end position="172"/>
    </location>
</feature>
<feature type="strand" evidence="10">
    <location>
        <begin position="175"/>
        <end position="186"/>
    </location>
</feature>
<feature type="strand" evidence="10">
    <location>
        <begin position="192"/>
        <end position="202"/>
    </location>
</feature>
<feature type="helix" evidence="10">
    <location>
        <begin position="208"/>
        <end position="229"/>
    </location>
</feature>
<feature type="helix" evidence="10">
    <location>
        <begin position="235"/>
        <end position="242"/>
    </location>
</feature>
<feature type="strand" evidence="10">
    <location>
        <begin position="246"/>
        <end position="248"/>
    </location>
</feature>
<feature type="helix" evidence="10">
    <location>
        <begin position="252"/>
        <end position="259"/>
    </location>
</feature>
<feature type="turn" evidence="10">
    <location>
        <begin position="260"/>
        <end position="262"/>
    </location>
</feature>
<feature type="helix" evidence="10">
    <location>
        <begin position="268"/>
        <end position="281"/>
    </location>
</feature>
<feature type="strand" evidence="10">
    <location>
        <begin position="289"/>
        <end position="296"/>
    </location>
</feature>
<feature type="turn" evidence="10">
    <location>
        <begin position="297"/>
        <end position="299"/>
    </location>
</feature>
<feature type="strand" evidence="10">
    <location>
        <begin position="302"/>
        <end position="307"/>
    </location>
</feature>
<feature type="helix" evidence="10">
    <location>
        <begin position="312"/>
        <end position="326"/>
    </location>
</feature>
<feature type="helix" evidence="10">
    <location>
        <begin position="337"/>
        <end position="345"/>
    </location>
</feature>
<feature type="turn" evidence="10">
    <location>
        <begin position="347"/>
        <end position="351"/>
    </location>
</feature>
<feature type="helix" evidence="10">
    <location>
        <begin position="353"/>
        <end position="356"/>
    </location>
</feature>
<dbReference type="EC" id="3.1.-.-"/>
<dbReference type="EMBL" id="AK024797">
    <property type="protein sequence ID" value="BAB15008.1"/>
    <property type="molecule type" value="mRNA"/>
</dbReference>
<dbReference type="EMBL" id="AL603839">
    <property type="status" value="NOT_ANNOTATED_CDS"/>
    <property type="molecule type" value="Genomic_DNA"/>
</dbReference>
<dbReference type="EMBL" id="CH471059">
    <property type="protein sequence ID" value="EAX07210.1"/>
    <property type="molecule type" value="Genomic_DNA"/>
</dbReference>
<dbReference type="EMBL" id="CH471059">
    <property type="protein sequence ID" value="EAX07211.1"/>
    <property type="molecule type" value="Genomic_DNA"/>
</dbReference>
<dbReference type="EMBL" id="CH471059">
    <property type="protein sequence ID" value="EAX07212.1"/>
    <property type="molecule type" value="Genomic_DNA"/>
</dbReference>
<dbReference type="EMBL" id="CH471059">
    <property type="protein sequence ID" value="EAX07213.1"/>
    <property type="molecule type" value="Genomic_DNA"/>
</dbReference>
<dbReference type="EMBL" id="CH471059">
    <property type="protein sequence ID" value="EAX07214.1"/>
    <property type="molecule type" value="Genomic_DNA"/>
</dbReference>
<dbReference type="EMBL" id="BC021969">
    <property type="protein sequence ID" value="AAH21969.1"/>
    <property type="molecule type" value="mRNA"/>
</dbReference>
<dbReference type="CCDS" id="CCDS453.1"/>
<dbReference type="RefSeq" id="NP_001333875.1">
    <property type="nucleotide sequence ID" value="NM_001346946.2"/>
</dbReference>
<dbReference type="RefSeq" id="NP_001333876.1">
    <property type="nucleotide sequence ID" value="NM_001346947.2"/>
</dbReference>
<dbReference type="RefSeq" id="NP_001333877.1">
    <property type="nucleotide sequence ID" value="NM_001346948.2"/>
</dbReference>
<dbReference type="RefSeq" id="NP_001333878.1">
    <property type="nucleotide sequence ID" value="NM_001346949.2"/>
</dbReference>
<dbReference type="RefSeq" id="NP_001333879.1">
    <property type="nucleotide sequence ID" value="NM_001346950.2"/>
</dbReference>
<dbReference type="RefSeq" id="NP_001333880.1">
    <property type="nucleotide sequence ID" value="NM_001346951.2"/>
</dbReference>
<dbReference type="RefSeq" id="NP_001333881.1">
    <property type="nucleotide sequence ID" value="NM_001346952.2"/>
</dbReference>
<dbReference type="RefSeq" id="NP_001333882.1">
    <property type="nucleotide sequence ID" value="NM_001346953.2"/>
</dbReference>
<dbReference type="RefSeq" id="NP_001333883.1">
    <property type="nucleotide sequence ID" value="NM_001346954.2"/>
</dbReference>
<dbReference type="RefSeq" id="NP_001333884.1">
    <property type="nucleotide sequence ID" value="NM_001346955.2"/>
</dbReference>
<dbReference type="RefSeq" id="NP_001333885.1">
    <property type="nucleotide sequence ID" value="NM_001346956.2"/>
</dbReference>
<dbReference type="RefSeq" id="NP_073611.1">
    <property type="nucleotide sequence ID" value="NM_022774.3"/>
</dbReference>
<dbReference type="RefSeq" id="XP_016857588.1">
    <property type="nucleotide sequence ID" value="XM_017002099.3"/>
</dbReference>
<dbReference type="RefSeq" id="XP_016857591.1">
    <property type="nucleotide sequence ID" value="XM_017002102.3"/>
</dbReference>
<dbReference type="PDB" id="7LW7">
    <property type="method" value="X-ray"/>
    <property type="resolution" value="2.50 A"/>
    <property type="chains" value="A=31-373"/>
</dbReference>
<dbReference type="PDB" id="7LW8">
    <property type="method" value="X-ray"/>
    <property type="resolution" value="2.88 A"/>
    <property type="chains" value="A=31-373"/>
</dbReference>
<dbReference type="PDB" id="7LW9">
    <property type="method" value="X-ray"/>
    <property type="resolution" value="2.71 A"/>
    <property type="chains" value="A=31-373"/>
</dbReference>
<dbReference type="PDB" id="7LWA">
    <property type="method" value="X-ray"/>
    <property type="resolution" value="2.85 A"/>
    <property type="chains" value="A=31-373"/>
</dbReference>
<dbReference type="PDBsum" id="7LW7"/>
<dbReference type="PDBsum" id="7LW8"/>
<dbReference type="PDBsum" id="7LW9"/>
<dbReference type="PDBsum" id="7LWA"/>
<dbReference type="SMR" id="Q9H790"/>
<dbReference type="BioGRID" id="122299">
    <property type="interactions" value="23"/>
</dbReference>
<dbReference type="FunCoup" id="Q9H790">
    <property type="interactions" value="2109"/>
</dbReference>
<dbReference type="STRING" id="9606.ENSP00000361788"/>
<dbReference type="iPTMnet" id="Q9H790"/>
<dbReference type="PhosphoSitePlus" id="Q9H790"/>
<dbReference type="BioMuta" id="EXO5"/>
<dbReference type="DMDM" id="74752706"/>
<dbReference type="jPOST" id="Q9H790"/>
<dbReference type="MassIVE" id="Q9H790"/>
<dbReference type="PaxDb" id="9606-ENSP00000361788"/>
<dbReference type="PeptideAtlas" id="Q9H790"/>
<dbReference type="ProteomicsDB" id="81089"/>
<dbReference type="Antibodypedia" id="32100">
    <property type="antibodies" value="87 antibodies from 19 providers"/>
</dbReference>
<dbReference type="DNASU" id="64789"/>
<dbReference type="Ensembl" id="ENST00000296380.9">
    <property type="protein sequence ID" value="ENSP00000296380.4"/>
    <property type="gene ID" value="ENSG00000164002.12"/>
</dbReference>
<dbReference type="Ensembl" id="ENST00000358527.6">
    <property type="protein sequence ID" value="ENSP00000351328.2"/>
    <property type="gene ID" value="ENSG00000164002.12"/>
</dbReference>
<dbReference type="Ensembl" id="ENST00000372703.1">
    <property type="protein sequence ID" value="ENSP00000361788.1"/>
    <property type="gene ID" value="ENSG00000164002.12"/>
</dbReference>
<dbReference type="Ensembl" id="ENST00000415550.6">
    <property type="protein sequence ID" value="ENSP00000413565.2"/>
    <property type="gene ID" value="ENSG00000164002.12"/>
</dbReference>
<dbReference type="Ensembl" id="ENST00000418186.2">
    <property type="protein sequence ID" value="ENSP00000391240.2"/>
    <property type="gene ID" value="ENSG00000164002.12"/>
</dbReference>
<dbReference type="Ensembl" id="ENST00000419161.2">
    <property type="protein sequence ID" value="ENSP00000392115.2"/>
    <property type="gene ID" value="ENSG00000164002.12"/>
</dbReference>
<dbReference type="Ensembl" id="ENST00000420209.2">
    <property type="protein sequence ID" value="ENSP00000398437.2"/>
    <property type="gene ID" value="ENSG00000164002.12"/>
</dbReference>
<dbReference type="Ensembl" id="ENST00000432259.6">
    <property type="protein sequence ID" value="ENSP00000416857.2"/>
    <property type="gene ID" value="ENSG00000164002.12"/>
</dbReference>
<dbReference type="Ensembl" id="ENST00000443729.6">
    <property type="protein sequence ID" value="ENSP00000409715.2"/>
    <property type="gene ID" value="ENSG00000164002.12"/>
</dbReference>
<dbReference type="Ensembl" id="ENST00000682383.1">
    <property type="protein sequence ID" value="ENSP00000508270.1"/>
    <property type="gene ID" value="ENSG00000164002.12"/>
</dbReference>
<dbReference type="GeneID" id="64789"/>
<dbReference type="KEGG" id="hsa:64789"/>
<dbReference type="MANE-Select" id="ENST00000415550.6">
    <property type="protein sequence ID" value="ENSP00000413565.2"/>
    <property type="RefSeq nucleotide sequence ID" value="NM_001346953.2"/>
    <property type="RefSeq protein sequence ID" value="NP_001333882.1"/>
</dbReference>
<dbReference type="UCSC" id="uc001cfp.4">
    <property type="organism name" value="human"/>
</dbReference>
<dbReference type="AGR" id="HGNC:26115"/>
<dbReference type="CTD" id="64789"/>
<dbReference type="DisGeNET" id="64789"/>
<dbReference type="GeneCards" id="EXO5"/>
<dbReference type="HGNC" id="HGNC:26115">
    <property type="gene designation" value="EXO5"/>
</dbReference>
<dbReference type="HPA" id="ENSG00000164002">
    <property type="expression patterns" value="Low tissue specificity"/>
</dbReference>
<dbReference type="MalaCards" id="EXO5"/>
<dbReference type="MIM" id="618601">
    <property type="type" value="gene"/>
</dbReference>
<dbReference type="neXtProt" id="NX_Q9H790"/>
<dbReference type="OpenTargets" id="ENSG00000164002"/>
<dbReference type="PharmGKB" id="PA164718736"/>
<dbReference type="VEuPathDB" id="HostDB:ENSG00000164002"/>
<dbReference type="eggNOG" id="KOG4760">
    <property type="taxonomic scope" value="Eukaryota"/>
</dbReference>
<dbReference type="GeneTree" id="ENSGT00390000015205"/>
<dbReference type="HOGENOM" id="CLU_013225_0_2_1"/>
<dbReference type="InParanoid" id="Q9H790"/>
<dbReference type="OMA" id="CPDKPLG"/>
<dbReference type="OrthoDB" id="354769at2759"/>
<dbReference type="PAN-GO" id="Q9H790">
    <property type="GO annotations" value="3 GO annotations based on evolutionary models"/>
</dbReference>
<dbReference type="PhylomeDB" id="Q9H790"/>
<dbReference type="TreeFam" id="TF332529"/>
<dbReference type="PathwayCommons" id="Q9H790"/>
<dbReference type="BioGRID-ORCS" id="64789">
    <property type="hits" value="17 hits in 1162 CRISPR screens"/>
</dbReference>
<dbReference type="GenomeRNAi" id="64789"/>
<dbReference type="Pharos" id="Q9H790">
    <property type="development level" value="Tbio"/>
</dbReference>
<dbReference type="PRO" id="PR:Q9H790"/>
<dbReference type="Proteomes" id="UP000005640">
    <property type="component" value="Chromosome 1"/>
</dbReference>
<dbReference type="RNAct" id="Q9H790">
    <property type="molecule type" value="protein"/>
</dbReference>
<dbReference type="Bgee" id="ENSG00000164002">
    <property type="expression patterns" value="Expressed in secondary oocyte and 123 other cell types or tissues"/>
</dbReference>
<dbReference type="ExpressionAtlas" id="Q9H790">
    <property type="expression patterns" value="baseline and differential"/>
</dbReference>
<dbReference type="GO" id="GO:0005829">
    <property type="term" value="C:cytosol"/>
    <property type="evidence" value="ECO:0000314"/>
    <property type="project" value="UniProtKB"/>
</dbReference>
<dbReference type="GO" id="GO:0005654">
    <property type="term" value="C:nucleoplasm"/>
    <property type="evidence" value="ECO:0000314"/>
    <property type="project" value="HPA"/>
</dbReference>
<dbReference type="GO" id="GO:0005634">
    <property type="term" value="C:nucleus"/>
    <property type="evidence" value="ECO:0000314"/>
    <property type="project" value="UniProtKB"/>
</dbReference>
<dbReference type="GO" id="GO:0051539">
    <property type="term" value="F:4 iron, 4 sulfur cluster binding"/>
    <property type="evidence" value="ECO:0000314"/>
    <property type="project" value="UniProtKB"/>
</dbReference>
<dbReference type="GO" id="GO:0003677">
    <property type="term" value="F:DNA binding"/>
    <property type="evidence" value="ECO:0007669"/>
    <property type="project" value="UniProtKB-KW"/>
</dbReference>
<dbReference type="GO" id="GO:0046872">
    <property type="term" value="F:metal ion binding"/>
    <property type="evidence" value="ECO:0007669"/>
    <property type="project" value="UniProtKB-KW"/>
</dbReference>
<dbReference type="GO" id="GO:0008310">
    <property type="term" value="F:single-stranded DNA 3'-5' DNA exonuclease activity"/>
    <property type="evidence" value="ECO:0000304"/>
    <property type="project" value="UniProtKB"/>
</dbReference>
<dbReference type="GO" id="GO:0045145">
    <property type="term" value="F:single-stranded DNA 5'-3' DNA exonuclease activity"/>
    <property type="evidence" value="ECO:0000314"/>
    <property type="project" value="UniProtKB"/>
</dbReference>
<dbReference type="GO" id="GO:0036297">
    <property type="term" value="P:interstrand cross-link repair"/>
    <property type="evidence" value="ECO:0000315"/>
    <property type="project" value="UniProtKB"/>
</dbReference>
<dbReference type="FunFam" id="3.90.320.10:FF:000004">
    <property type="entry name" value="Probable exonuclease V"/>
    <property type="match status" value="1"/>
</dbReference>
<dbReference type="Gene3D" id="3.90.320.10">
    <property type="match status" value="1"/>
</dbReference>
<dbReference type="InterPro" id="IPR019190">
    <property type="entry name" value="EXOV"/>
</dbReference>
<dbReference type="InterPro" id="IPR011604">
    <property type="entry name" value="PDDEXK-like_dom_sf"/>
</dbReference>
<dbReference type="PANTHER" id="PTHR14464">
    <property type="entry name" value="EXONUCLEASE V"/>
    <property type="match status" value="1"/>
</dbReference>
<dbReference type="PANTHER" id="PTHR14464:SF4">
    <property type="entry name" value="EXONUCLEASE V"/>
    <property type="match status" value="1"/>
</dbReference>
<dbReference type="Pfam" id="PF09810">
    <property type="entry name" value="Exo5"/>
    <property type="match status" value="2"/>
</dbReference>
<reference key="1">
    <citation type="journal article" date="2004" name="Nat. Genet.">
        <title>Complete sequencing and characterization of 21,243 full-length human cDNAs.</title>
        <authorList>
            <person name="Ota T."/>
            <person name="Suzuki Y."/>
            <person name="Nishikawa T."/>
            <person name="Otsuki T."/>
            <person name="Sugiyama T."/>
            <person name="Irie R."/>
            <person name="Wakamatsu A."/>
            <person name="Hayashi K."/>
            <person name="Sato H."/>
            <person name="Nagai K."/>
            <person name="Kimura K."/>
            <person name="Makita H."/>
            <person name="Sekine M."/>
            <person name="Obayashi M."/>
            <person name="Nishi T."/>
            <person name="Shibahara T."/>
            <person name="Tanaka T."/>
            <person name="Ishii S."/>
            <person name="Yamamoto J."/>
            <person name="Saito K."/>
            <person name="Kawai Y."/>
            <person name="Isono Y."/>
            <person name="Nakamura Y."/>
            <person name="Nagahari K."/>
            <person name="Murakami K."/>
            <person name="Yasuda T."/>
            <person name="Iwayanagi T."/>
            <person name="Wagatsuma M."/>
            <person name="Shiratori A."/>
            <person name="Sudo H."/>
            <person name="Hosoiri T."/>
            <person name="Kaku Y."/>
            <person name="Kodaira H."/>
            <person name="Kondo H."/>
            <person name="Sugawara M."/>
            <person name="Takahashi M."/>
            <person name="Kanda K."/>
            <person name="Yokoi T."/>
            <person name="Furuya T."/>
            <person name="Kikkawa E."/>
            <person name="Omura Y."/>
            <person name="Abe K."/>
            <person name="Kamihara K."/>
            <person name="Katsuta N."/>
            <person name="Sato K."/>
            <person name="Tanikawa M."/>
            <person name="Yamazaki M."/>
            <person name="Ninomiya K."/>
            <person name="Ishibashi T."/>
            <person name="Yamashita H."/>
            <person name="Murakawa K."/>
            <person name="Fujimori K."/>
            <person name="Tanai H."/>
            <person name="Kimata M."/>
            <person name="Watanabe M."/>
            <person name="Hiraoka S."/>
            <person name="Chiba Y."/>
            <person name="Ishida S."/>
            <person name="Ono Y."/>
            <person name="Takiguchi S."/>
            <person name="Watanabe S."/>
            <person name="Yosida M."/>
            <person name="Hotuta T."/>
            <person name="Kusano J."/>
            <person name="Kanehori K."/>
            <person name="Takahashi-Fujii A."/>
            <person name="Hara H."/>
            <person name="Tanase T.-O."/>
            <person name="Nomura Y."/>
            <person name="Togiya S."/>
            <person name="Komai F."/>
            <person name="Hara R."/>
            <person name="Takeuchi K."/>
            <person name="Arita M."/>
            <person name="Imose N."/>
            <person name="Musashino K."/>
            <person name="Yuuki H."/>
            <person name="Oshima A."/>
            <person name="Sasaki N."/>
            <person name="Aotsuka S."/>
            <person name="Yoshikawa Y."/>
            <person name="Matsunawa H."/>
            <person name="Ichihara T."/>
            <person name="Shiohata N."/>
            <person name="Sano S."/>
            <person name="Moriya S."/>
            <person name="Momiyama H."/>
            <person name="Satoh N."/>
            <person name="Takami S."/>
            <person name="Terashima Y."/>
            <person name="Suzuki O."/>
            <person name="Nakagawa S."/>
            <person name="Senoh A."/>
            <person name="Mizoguchi H."/>
            <person name="Goto Y."/>
            <person name="Shimizu F."/>
            <person name="Wakebe H."/>
            <person name="Hishigaki H."/>
            <person name="Watanabe T."/>
            <person name="Sugiyama A."/>
            <person name="Takemoto M."/>
            <person name="Kawakami B."/>
            <person name="Yamazaki M."/>
            <person name="Watanabe K."/>
            <person name="Kumagai A."/>
            <person name="Itakura S."/>
            <person name="Fukuzumi Y."/>
            <person name="Fujimori Y."/>
            <person name="Komiyama M."/>
            <person name="Tashiro H."/>
            <person name="Tanigami A."/>
            <person name="Fujiwara T."/>
            <person name="Ono T."/>
            <person name="Yamada K."/>
            <person name="Fujii Y."/>
            <person name="Ozaki K."/>
            <person name="Hirao M."/>
            <person name="Ohmori Y."/>
            <person name="Kawabata A."/>
            <person name="Hikiji T."/>
            <person name="Kobatake N."/>
            <person name="Inagaki H."/>
            <person name="Ikema Y."/>
            <person name="Okamoto S."/>
            <person name="Okitani R."/>
            <person name="Kawakami T."/>
            <person name="Noguchi S."/>
            <person name="Itoh T."/>
            <person name="Shigeta K."/>
            <person name="Senba T."/>
            <person name="Matsumura K."/>
            <person name="Nakajima Y."/>
            <person name="Mizuno T."/>
            <person name="Morinaga M."/>
            <person name="Sasaki M."/>
            <person name="Togashi T."/>
            <person name="Oyama M."/>
            <person name="Hata H."/>
            <person name="Watanabe M."/>
            <person name="Komatsu T."/>
            <person name="Mizushima-Sugano J."/>
            <person name="Satoh T."/>
            <person name="Shirai Y."/>
            <person name="Takahashi Y."/>
            <person name="Nakagawa K."/>
            <person name="Okumura K."/>
            <person name="Nagase T."/>
            <person name="Nomura N."/>
            <person name="Kikuchi H."/>
            <person name="Masuho Y."/>
            <person name="Yamashita R."/>
            <person name="Nakai K."/>
            <person name="Yada T."/>
            <person name="Nakamura Y."/>
            <person name="Ohara O."/>
            <person name="Isogai T."/>
            <person name="Sugano S."/>
        </authorList>
    </citation>
    <scope>NUCLEOTIDE SEQUENCE [LARGE SCALE MRNA]</scope>
    <source>
        <tissue>Coronary artery</tissue>
    </source>
</reference>
<reference key="2">
    <citation type="journal article" date="2006" name="Nature">
        <title>The DNA sequence and biological annotation of human chromosome 1.</title>
        <authorList>
            <person name="Gregory S.G."/>
            <person name="Barlow K.F."/>
            <person name="McLay K.E."/>
            <person name="Kaul R."/>
            <person name="Swarbreck D."/>
            <person name="Dunham A."/>
            <person name="Scott C.E."/>
            <person name="Howe K.L."/>
            <person name="Woodfine K."/>
            <person name="Spencer C.C.A."/>
            <person name="Jones M.C."/>
            <person name="Gillson C."/>
            <person name="Searle S."/>
            <person name="Zhou Y."/>
            <person name="Kokocinski F."/>
            <person name="McDonald L."/>
            <person name="Evans R."/>
            <person name="Phillips K."/>
            <person name="Atkinson A."/>
            <person name="Cooper R."/>
            <person name="Jones C."/>
            <person name="Hall R.E."/>
            <person name="Andrews T.D."/>
            <person name="Lloyd C."/>
            <person name="Ainscough R."/>
            <person name="Almeida J.P."/>
            <person name="Ambrose K.D."/>
            <person name="Anderson F."/>
            <person name="Andrew R.W."/>
            <person name="Ashwell R.I.S."/>
            <person name="Aubin K."/>
            <person name="Babbage A.K."/>
            <person name="Bagguley C.L."/>
            <person name="Bailey J."/>
            <person name="Beasley H."/>
            <person name="Bethel G."/>
            <person name="Bird C.P."/>
            <person name="Bray-Allen S."/>
            <person name="Brown J.Y."/>
            <person name="Brown A.J."/>
            <person name="Buckley D."/>
            <person name="Burton J."/>
            <person name="Bye J."/>
            <person name="Carder C."/>
            <person name="Chapman J.C."/>
            <person name="Clark S.Y."/>
            <person name="Clarke G."/>
            <person name="Clee C."/>
            <person name="Cobley V."/>
            <person name="Collier R.E."/>
            <person name="Corby N."/>
            <person name="Coville G.J."/>
            <person name="Davies J."/>
            <person name="Deadman R."/>
            <person name="Dunn M."/>
            <person name="Earthrowl M."/>
            <person name="Ellington A.G."/>
            <person name="Errington H."/>
            <person name="Frankish A."/>
            <person name="Frankland J."/>
            <person name="French L."/>
            <person name="Garner P."/>
            <person name="Garnett J."/>
            <person name="Gay L."/>
            <person name="Ghori M.R.J."/>
            <person name="Gibson R."/>
            <person name="Gilby L.M."/>
            <person name="Gillett W."/>
            <person name="Glithero R.J."/>
            <person name="Grafham D.V."/>
            <person name="Griffiths C."/>
            <person name="Griffiths-Jones S."/>
            <person name="Grocock R."/>
            <person name="Hammond S."/>
            <person name="Harrison E.S.I."/>
            <person name="Hart E."/>
            <person name="Haugen E."/>
            <person name="Heath P.D."/>
            <person name="Holmes S."/>
            <person name="Holt K."/>
            <person name="Howden P.J."/>
            <person name="Hunt A.R."/>
            <person name="Hunt S.E."/>
            <person name="Hunter G."/>
            <person name="Isherwood J."/>
            <person name="James R."/>
            <person name="Johnson C."/>
            <person name="Johnson D."/>
            <person name="Joy A."/>
            <person name="Kay M."/>
            <person name="Kershaw J.K."/>
            <person name="Kibukawa M."/>
            <person name="Kimberley A.M."/>
            <person name="King A."/>
            <person name="Knights A.J."/>
            <person name="Lad H."/>
            <person name="Laird G."/>
            <person name="Lawlor S."/>
            <person name="Leongamornlert D.A."/>
            <person name="Lloyd D.M."/>
            <person name="Loveland J."/>
            <person name="Lovell J."/>
            <person name="Lush M.J."/>
            <person name="Lyne R."/>
            <person name="Martin S."/>
            <person name="Mashreghi-Mohammadi M."/>
            <person name="Matthews L."/>
            <person name="Matthews N.S.W."/>
            <person name="McLaren S."/>
            <person name="Milne S."/>
            <person name="Mistry S."/>
            <person name="Moore M.J.F."/>
            <person name="Nickerson T."/>
            <person name="O'Dell C.N."/>
            <person name="Oliver K."/>
            <person name="Palmeiri A."/>
            <person name="Palmer S.A."/>
            <person name="Parker A."/>
            <person name="Patel D."/>
            <person name="Pearce A.V."/>
            <person name="Peck A.I."/>
            <person name="Pelan S."/>
            <person name="Phelps K."/>
            <person name="Phillimore B.J."/>
            <person name="Plumb R."/>
            <person name="Rajan J."/>
            <person name="Raymond C."/>
            <person name="Rouse G."/>
            <person name="Saenphimmachak C."/>
            <person name="Sehra H.K."/>
            <person name="Sheridan E."/>
            <person name="Shownkeen R."/>
            <person name="Sims S."/>
            <person name="Skuce C.D."/>
            <person name="Smith M."/>
            <person name="Steward C."/>
            <person name="Subramanian S."/>
            <person name="Sycamore N."/>
            <person name="Tracey A."/>
            <person name="Tromans A."/>
            <person name="Van Helmond Z."/>
            <person name="Wall M."/>
            <person name="Wallis J.M."/>
            <person name="White S."/>
            <person name="Whitehead S.L."/>
            <person name="Wilkinson J.E."/>
            <person name="Willey D.L."/>
            <person name="Williams H."/>
            <person name="Wilming L."/>
            <person name="Wray P.W."/>
            <person name="Wu Z."/>
            <person name="Coulson A."/>
            <person name="Vaudin M."/>
            <person name="Sulston J.E."/>
            <person name="Durbin R.M."/>
            <person name="Hubbard T."/>
            <person name="Wooster R."/>
            <person name="Dunham I."/>
            <person name="Carter N.P."/>
            <person name="McVean G."/>
            <person name="Ross M.T."/>
            <person name="Harrow J."/>
            <person name="Olson M.V."/>
            <person name="Beck S."/>
            <person name="Rogers J."/>
            <person name="Bentley D.R."/>
        </authorList>
    </citation>
    <scope>NUCLEOTIDE SEQUENCE [LARGE SCALE GENOMIC DNA]</scope>
</reference>
<reference key="3">
    <citation type="submission" date="2005-09" db="EMBL/GenBank/DDBJ databases">
        <authorList>
            <person name="Mural R.J."/>
            <person name="Istrail S."/>
            <person name="Sutton G.G."/>
            <person name="Florea L."/>
            <person name="Halpern A.L."/>
            <person name="Mobarry C.M."/>
            <person name="Lippert R."/>
            <person name="Walenz B."/>
            <person name="Shatkay H."/>
            <person name="Dew I."/>
            <person name="Miller J.R."/>
            <person name="Flanigan M.J."/>
            <person name="Edwards N.J."/>
            <person name="Bolanos R."/>
            <person name="Fasulo D."/>
            <person name="Halldorsson B.V."/>
            <person name="Hannenhalli S."/>
            <person name="Turner R."/>
            <person name="Yooseph S."/>
            <person name="Lu F."/>
            <person name="Nusskern D.R."/>
            <person name="Shue B.C."/>
            <person name="Zheng X.H."/>
            <person name="Zhong F."/>
            <person name="Delcher A.L."/>
            <person name="Huson D.H."/>
            <person name="Kravitz S.A."/>
            <person name="Mouchard L."/>
            <person name="Reinert K."/>
            <person name="Remington K.A."/>
            <person name="Clark A.G."/>
            <person name="Waterman M.S."/>
            <person name="Eichler E.E."/>
            <person name="Adams M.D."/>
            <person name="Hunkapiller M.W."/>
            <person name="Myers E.W."/>
            <person name="Venter J.C."/>
        </authorList>
    </citation>
    <scope>NUCLEOTIDE SEQUENCE [LARGE SCALE GENOMIC DNA]</scope>
</reference>
<reference key="4">
    <citation type="journal article" date="2004" name="Genome Res.">
        <title>The status, quality, and expansion of the NIH full-length cDNA project: the Mammalian Gene Collection (MGC).</title>
        <authorList>
            <consortium name="The MGC Project Team"/>
        </authorList>
    </citation>
    <scope>NUCLEOTIDE SEQUENCE [LARGE SCALE MRNA]</scope>
    <scope>VARIANT VAL-172</scope>
    <source>
        <tissue>Ovary</tissue>
    </source>
</reference>
<reference key="5">
    <citation type="journal article" date="2012" name="J. Biol. Chem.">
        <title>Human exonuclease 5 is a novel sliding exonuclease required for genome stability.</title>
        <authorList>
            <person name="Sparks J.L."/>
            <person name="Kumar R."/>
            <person name="Singh M."/>
            <person name="Wold M.S."/>
            <person name="Pandita T.K."/>
            <person name="Burgers P.M."/>
        </authorList>
    </citation>
    <scope>FUNCTION</scope>
    <scope>SUBCELLULAR LOCATION</scope>
    <scope>CATALYTIC ACTIVITY</scope>
    <scope>COFACTOR</scope>
    <scope>INTERACTION WITH THE REPLICATION PROTEIN A (RPA) COMPLEX</scope>
    <scope>MUTAGENESIS OF GLU-196; CYS-343 AND CYS-346</scope>
    <scope>CHARACTERIZATION OF VARIANTS ASN-115 AND VAL-172</scope>
</reference>
<reference key="6">
    <citation type="journal article" date="2019" name="DNA Repair">
        <title>The roles of fission yeast exonuclease 5 in nuclear and mitochondrial genome stability.</title>
        <authorList>
            <person name="Sparks J.L."/>
            <person name="Gerik K.J."/>
            <person name="Stith C.M."/>
            <person name="Yoder B.L."/>
            <person name="Burgers P.M."/>
        </authorList>
    </citation>
    <scope>FUNCTION</scope>
    <scope>CATALYTIC ACTIVITY</scope>
    <scope>BIOPHYSICOCHEMICAL PROPERTIES</scope>
</reference>
<reference evidence="6 7 8 9" key="7">
    <citation type="journal article" date="2021" name="Mol. Cell">
        <title>EXO5-DNA structure and BLM interactions direct DNA resection critical for ATR-dependent replication restart.</title>
        <authorList>
            <person name="Hambarde S."/>
            <person name="Tsai C.L."/>
            <person name="Pandita R.K."/>
            <person name="Bacolla A."/>
            <person name="Maitra A."/>
            <person name="Charaka V."/>
            <person name="Hunt C.R."/>
            <person name="Kumar R."/>
            <person name="Limbo O."/>
            <person name="Le Meur R."/>
            <person name="Chazin W.J."/>
            <person name="Tsutakawa S.E."/>
            <person name="Russell P."/>
            <person name="Schlacher K."/>
            <person name="Pandita T.K."/>
            <person name="Tainer J.A."/>
        </authorList>
    </citation>
    <scope>X-RAY CRYSTALLOGRAPHY (2.50 ANGSTROMS) OF 31-373 IN COMPLEX WITH MG(2+) AND [4FE-4S] CLUSTER</scope>
</reference>
<sequence length="373" mass="41816">MAETREEETVSAEASGFSDLSDSEFLEFLDLEDAQESKALVNMPGPSSESLGKDDKPISLQNWKRGLDILSPMERFHLKYLYVTDLATQNWCELQTAYGKELPGFLAPEKAAVLDTGASIHLARELELHDLVTVPVTTKEDAWAIKFLNILLLIPTLQSEGHIREFPVFGEGEGVLLVGVIDELHYTAKGELELAELKTRRRPMLPLEAQKKKDCFQVSLYKYIFDAMVQGKVTPASLIHHTKLCLEKPLGPSVLRHAQQGGFSVKSLGDLMELVFLSLTLSDLPVIDILKIEYIHQETATVLGTEIVAFKEKEVRAKVQHYMAYWMGHREPQGVDVEEAWKCRTCTYADICEWRKGSGVLSSTLAPQVKKAK</sequence>
<accession>Q9H790</accession>
<accession>D3DPV4</accession>
<accession>Q5SWM7</accession>
<accession>Q5SWM8</accession>
<accession>Q5SWM9</accession>
<accession>Q5SWN0</accession>
<accession>Q5SWN1</accession>
<accession>Q8WTW9</accession>
<organism>
    <name type="scientific">Homo sapiens</name>
    <name type="common">Human</name>
    <dbReference type="NCBI Taxonomy" id="9606"/>
    <lineage>
        <taxon>Eukaryota</taxon>
        <taxon>Metazoa</taxon>
        <taxon>Chordata</taxon>
        <taxon>Craniata</taxon>
        <taxon>Vertebrata</taxon>
        <taxon>Euteleostomi</taxon>
        <taxon>Mammalia</taxon>
        <taxon>Eutheria</taxon>
        <taxon>Euarchontoglires</taxon>
        <taxon>Primates</taxon>
        <taxon>Haplorrhini</taxon>
        <taxon>Catarrhini</taxon>
        <taxon>Hominidae</taxon>
        <taxon>Homo</taxon>
    </lineage>
</organism>
<comment type="function">
    <text evidence="3 4">Single-stranded DNA (ssDNA) bidirectional exonuclease involved in DNA repair. Probably involved in DNA repair following ultraviolet (UV) irradiation and interstrand cross-links (ICLs) damage. Has both 5'-3' and 3'-5' exonuclease activities with a strong preference for 5'-ends. Acts as a sliding exonuclease that loads at ssDNA ends and then slides along the ssDNA prior to cutting; however the sliding and the 3'-5' exonuclease activities are abolished upon binding to the replication protein A (RPA) complex that enforces 5'-directionality activity.</text>
</comment>
<comment type="cofactor">
    <cofactor evidence="3">
        <name>[4Fe-4S] cluster</name>
        <dbReference type="ChEBI" id="CHEBI:49883"/>
    </cofactor>
    <text evidence="3">Binds 1 [4Fe-4S] cluster.</text>
</comment>
<comment type="cofactor">
    <cofactor evidence="1">
        <name>Mg(2+)</name>
        <dbReference type="ChEBI" id="CHEBI:18420"/>
    </cofactor>
</comment>
<comment type="biophysicochemical properties">
    <kinetics>
        <KM evidence="4">3200 nM for a 34-mer ssDNA</KM>
        <text evidence="4">kcat is 0.012 sec(-1) with a 34-mer ssDNA as substrate.</text>
    </kinetics>
</comment>
<comment type="subunit">
    <text evidence="3">Monomer; monomeric form has weak exonuclease activity. Homodimer; homodimeric form is unsure but has much higher exonuclease activity, suggesting that it could homodimerize upon DNA-binding. Interacts with the replication protein A (RPA) complex.</text>
</comment>
<comment type="subcellular location">
    <subcellularLocation>
        <location evidence="3">Nucleus</location>
    </subcellularLocation>
    <subcellularLocation>
        <location evidence="3">Cytoplasm</location>
        <location evidence="3">Cytosol</location>
    </subcellularLocation>
    <text>Localizes to repair foci in response to DNA damage.</text>
</comment>
<comment type="similarity">
    <text evidence="5">Belongs to the EXO5 family.</text>
</comment>
<proteinExistence type="evidence at protein level"/>
<evidence type="ECO:0000250" key="1">
    <source>
        <dbReference type="UniProtKB" id="P38289"/>
    </source>
</evidence>
<evidence type="ECO:0000269" key="2">
    <source>
    </source>
</evidence>
<evidence type="ECO:0000269" key="3">
    <source>
    </source>
</evidence>
<evidence type="ECO:0000269" key="4">
    <source>
    </source>
</evidence>
<evidence type="ECO:0000305" key="5"/>
<evidence type="ECO:0007744" key="6">
    <source>
        <dbReference type="PDB" id="7LW7"/>
    </source>
</evidence>
<evidence type="ECO:0007744" key="7">
    <source>
        <dbReference type="PDB" id="7LW8"/>
    </source>
</evidence>
<evidence type="ECO:0007744" key="8">
    <source>
        <dbReference type="PDB" id="7LW9"/>
    </source>
</evidence>
<evidence type="ECO:0007744" key="9">
    <source>
        <dbReference type="PDB" id="7LWA"/>
    </source>
</evidence>
<evidence type="ECO:0007829" key="10">
    <source>
        <dbReference type="PDB" id="7LW7"/>
    </source>
</evidence>
<protein>
    <recommendedName>
        <fullName>Exonuclease V</fullName>
        <shortName>Exo V</shortName>
        <shortName>hExo5</shortName>
        <ecNumber>3.1.-.-</ecNumber>
    </recommendedName>
    <alternativeName>
        <fullName>Defects in morphology protein 1 homolog</fullName>
    </alternativeName>
</protein>
<name>EXO5_HUMAN</name>
<gene>
    <name type="primary">EXO5</name>
    <name type="synonym">C1orf176</name>
    <name type="synonym">DEM1</name>
</gene>